<dbReference type="EC" id="7.6.2.2" evidence="1"/>
<dbReference type="EMBL" id="DS571247">
    <property type="protein sequence ID" value="EAL48129.2"/>
    <property type="molecule type" value="Genomic_DNA"/>
</dbReference>
<dbReference type="EMBL" id="M29059">
    <property type="protein sequence ID" value="AAA29108.1"/>
    <property type="molecule type" value="Genomic_DNA"/>
</dbReference>
<dbReference type="PIR" id="B44970">
    <property type="entry name" value="B44970"/>
</dbReference>
<dbReference type="RefSeq" id="XP_653515.2">
    <property type="nucleotide sequence ID" value="XM_648423.2"/>
</dbReference>
<dbReference type="SMR" id="P16876"/>
<dbReference type="STRING" id="5759.C4M3W0"/>
<dbReference type="EnsemblProtists" id="GAT96026">
    <property type="protein sequence ID" value="GAT96026"/>
    <property type="gene ID" value="CL6EHI_016380"/>
</dbReference>
<dbReference type="EnsemblProtists" id="rna_EHI_016380-1">
    <property type="protein sequence ID" value="rna_EHI_016380-1"/>
    <property type="gene ID" value="EHI_016380"/>
</dbReference>
<dbReference type="GeneID" id="3407833"/>
<dbReference type="KEGG" id="ehi:EHI_016380"/>
<dbReference type="VEuPathDB" id="AmoebaDB:EHI5A_238460"/>
<dbReference type="VEuPathDB" id="AmoebaDB:EHI5A_262080"/>
<dbReference type="VEuPathDB" id="AmoebaDB:EHI5A_266680"/>
<dbReference type="VEuPathDB" id="AmoebaDB:EHI7A_016780"/>
<dbReference type="VEuPathDB" id="AmoebaDB:EHI7A_038990"/>
<dbReference type="VEuPathDB" id="AmoebaDB:EHI8A_033300"/>
<dbReference type="VEuPathDB" id="AmoebaDB:EHI8A_037850"/>
<dbReference type="VEuPathDB" id="AmoebaDB:EHI8A_150200"/>
<dbReference type="VEuPathDB" id="AmoebaDB:EHI_016380"/>
<dbReference type="VEuPathDB" id="AmoebaDB:KM1_028480"/>
<dbReference type="VEuPathDB" id="AmoebaDB:KM1_298100"/>
<dbReference type="VEuPathDB" id="AmoebaDB:KM1_324480"/>
<dbReference type="eggNOG" id="KOG0055">
    <property type="taxonomic scope" value="Eukaryota"/>
</dbReference>
<dbReference type="HOGENOM" id="CLU_000604_17_2_1"/>
<dbReference type="OMA" id="YEMCLGQ"/>
<dbReference type="OrthoDB" id="6500128at2759"/>
<dbReference type="Proteomes" id="UP000001926">
    <property type="component" value="Partially assembled WGS sequence"/>
</dbReference>
<dbReference type="GO" id="GO:0016020">
    <property type="term" value="C:membrane"/>
    <property type="evidence" value="ECO:0000318"/>
    <property type="project" value="GO_Central"/>
</dbReference>
<dbReference type="GO" id="GO:0140359">
    <property type="term" value="F:ABC-type transporter activity"/>
    <property type="evidence" value="ECO:0007669"/>
    <property type="project" value="InterPro"/>
</dbReference>
<dbReference type="GO" id="GO:0005524">
    <property type="term" value="F:ATP binding"/>
    <property type="evidence" value="ECO:0007669"/>
    <property type="project" value="UniProtKB-KW"/>
</dbReference>
<dbReference type="GO" id="GO:0016887">
    <property type="term" value="F:ATP hydrolysis activity"/>
    <property type="evidence" value="ECO:0007669"/>
    <property type="project" value="InterPro"/>
</dbReference>
<dbReference type="GO" id="GO:0042626">
    <property type="term" value="F:ATPase-coupled transmembrane transporter activity"/>
    <property type="evidence" value="ECO:0000318"/>
    <property type="project" value="GO_Central"/>
</dbReference>
<dbReference type="GO" id="GO:0055085">
    <property type="term" value="P:transmembrane transport"/>
    <property type="evidence" value="ECO:0000318"/>
    <property type="project" value="GO_Central"/>
</dbReference>
<dbReference type="CDD" id="cd18577">
    <property type="entry name" value="ABC_6TM_Pgp_ABCB1_D1_like"/>
    <property type="match status" value="1"/>
</dbReference>
<dbReference type="CDD" id="cd18578">
    <property type="entry name" value="ABC_6TM_Pgp_ABCB1_D2_like"/>
    <property type="match status" value="1"/>
</dbReference>
<dbReference type="CDD" id="cd03249">
    <property type="entry name" value="ABC_MTABC3_MDL1_MDL2"/>
    <property type="match status" value="2"/>
</dbReference>
<dbReference type="FunFam" id="3.40.50.300:FF:000916">
    <property type="entry name" value="ABC transporter B family member 9"/>
    <property type="match status" value="1"/>
</dbReference>
<dbReference type="FunFam" id="1.20.1560.10:FF:000163">
    <property type="entry name" value="ABC transporter B family protein"/>
    <property type="match status" value="1"/>
</dbReference>
<dbReference type="FunFam" id="1.20.1560.10:FF:000018">
    <property type="entry name" value="ATP-binding cassette subfamily B member 11"/>
    <property type="match status" value="1"/>
</dbReference>
<dbReference type="FunFam" id="3.40.50.300:FF:000302">
    <property type="entry name" value="ATP-binding cassette subfamily B member 5"/>
    <property type="match status" value="1"/>
</dbReference>
<dbReference type="Gene3D" id="1.20.1560.10">
    <property type="entry name" value="ABC transporter type 1, transmembrane domain"/>
    <property type="match status" value="2"/>
</dbReference>
<dbReference type="Gene3D" id="3.40.50.300">
    <property type="entry name" value="P-loop containing nucleotide triphosphate hydrolases"/>
    <property type="match status" value="2"/>
</dbReference>
<dbReference type="InterPro" id="IPR003593">
    <property type="entry name" value="AAA+_ATPase"/>
</dbReference>
<dbReference type="InterPro" id="IPR011527">
    <property type="entry name" value="ABC1_TM_dom"/>
</dbReference>
<dbReference type="InterPro" id="IPR036640">
    <property type="entry name" value="ABC1_TM_sf"/>
</dbReference>
<dbReference type="InterPro" id="IPR003439">
    <property type="entry name" value="ABC_transporter-like_ATP-bd"/>
</dbReference>
<dbReference type="InterPro" id="IPR017871">
    <property type="entry name" value="ABC_transporter-like_CS"/>
</dbReference>
<dbReference type="InterPro" id="IPR027417">
    <property type="entry name" value="P-loop_NTPase"/>
</dbReference>
<dbReference type="InterPro" id="IPR039421">
    <property type="entry name" value="Type_1_exporter"/>
</dbReference>
<dbReference type="PANTHER" id="PTHR43394">
    <property type="entry name" value="ATP-DEPENDENT PERMEASE MDL1, MITOCHONDRIAL"/>
    <property type="match status" value="1"/>
</dbReference>
<dbReference type="PANTHER" id="PTHR43394:SF27">
    <property type="entry name" value="ATP-DEPENDENT TRANSLOCASE ABCB1-LIKE"/>
    <property type="match status" value="1"/>
</dbReference>
<dbReference type="Pfam" id="PF00664">
    <property type="entry name" value="ABC_membrane"/>
    <property type="match status" value="2"/>
</dbReference>
<dbReference type="Pfam" id="PF00005">
    <property type="entry name" value="ABC_tran"/>
    <property type="match status" value="2"/>
</dbReference>
<dbReference type="SMART" id="SM00382">
    <property type="entry name" value="AAA"/>
    <property type="match status" value="2"/>
</dbReference>
<dbReference type="SUPFAM" id="SSF90123">
    <property type="entry name" value="ABC transporter transmembrane region"/>
    <property type="match status" value="2"/>
</dbReference>
<dbReference type="SUPFAM" id="SSF52540">
    <property type="entry name" value="P-loop containing nucleoside triphosphate hydrolases"/>
    <property type="match status" value="2"/>
</dbReference>
<dbReference type="PROSITE" id="PS50929">
    <property type="entry name" value="ABC_TM1F"/>
    <property type="match status" value="2"/>
</dbReference>
<dbReference type="PROSITE" id="PS00211">
    <property type="entry name" value="ABC_TRANSPORTER_1"/>
    <property type="match status" value="2"/>
</dbReference>
<dbReference type="PROSITE" id="PS50893">
    <property type="entry name" value="ABC_TRANSPORTER_2"/>
    <property type="match status" value="2"/>
</dbReference>
<sequence length="1312" mass="145467">MISNPSETKVSNFDDFSVFDVTPDPDELARKHKKPNDHGSVSIKELYRYAGFIDYILLIGGIIGAMAAGVLQPMQMLVMGDMMDTFDTSSMQNMDFSNISKAEQIEMNYELTASVADTINDLVLKMIYFAIGTTVGMFLMHFCFFVLSERQGIKIRMLYFRALLRQDAGWYDFHESGELTSRIASDVQQIQDGMSQKFGVLFQTICGFIAGYAIGFSKCWDLTLVIMAVTPFMLITVLFLGFFATKFTAKGENSLSDAGAIAEATIGNMRTVQSLGQEHEFADAYDKKMDSIKKYYILRAQVVGVGLGMLLFFMMGSLALGSWYGSLVIRGKGASKDCSAGTVMVVFMSVLMATMSIAQVAMPINALSTAQAAAYRIYQTIDRIPDIDCRSTAGLVPTECIGNIKLEDVQFRYPTRPNKQILGGLDLEIKKGETVALVGASGCGKSTTIQLVQRVYDPVGGKVTLDGNDLRELNLKWLRNQIGLVGQEPILFACTIRENIMLGAKDGETPTEEEMIECAKMANAHEFISHLPEGYDTMVGERGAALSGGQKQRIAIARALIRKPTILLLDEATSALDTQSEKIVQQALEKASQGRTTIIVAHRLTTVRNANRICVFHQGEIIEQGTHQELMDLKATYYGLVKRQSMEEEVDQETVENDLKKFREQEDKEAEQGILHKEESSTLESSDVVERLTKEYEAETKYLKHSNRFVLLRVLLNNFRHEWLLSFLGLIGGIGAGAVFPFYMIQFIGLLMTLMGMSPDVEPTTEQLHTVRNKCIWILLFGLAVFVTTYMYLGLFLSAGEKMIVRLRKLLYSALLRQNISYYDRKENMVGKVTTRLASDPTTLKGISGERVGNVVNTLSSVGFGVGIAFYYDWKVALCVMAIAPVLIVIVFLNGKLNSIQSSPATAAYEQSGITLVEAVESIKTVQSLTREDFFYNKFAADLKRPKKNILRWGPTLAFVSAANTFVTSCISAYSFYIGTYLIKKKSDYNMEFLPFTAQFMDSFTKMQKAMMSIMMAANSCGNLGQMIPDVGKAIEAAKNTFDVLDRKPSIDCYSEEGETFNDVKGEIEFKDICFRYPTRPDNAVLKGISFKAEQGKTIALVGASGCGKSTSIQLIERFYDPTYGDVLLDGHNIKDLNIHFLRSQIGMVGQEPVLFAESVIDNIRRGVPKGVEVSNEQIYAAAKMANAHDFISAMPEGYNTMVGDRGAQISGGQKQRIAIARALIRNPKVLLLDEATSALDSESEKIVQDALDKAAKGRTTIVIAHRLSTIQNADQICVIMRGKIAERGTHQELIDLKGFYYTLAMQQFGTV</sequence>
<comment type="function">
    <text evidence="1">Energy-dependent efflux pump responsible for decreased drug accumulation in multidrug resistance parasites.</text>
</comment>
<comment type="catalytic activity">
    <reaction evidence="1">
        <text>ATP + H2O + xenobioticSide 1 = ADP + phosphate + xenobioticSide 2.</text>
        <dbReference type="EC" id="7.6.2.2"/>
    </reaction>
</comment>
<comment type="subcellular location">
    <subcellularLocation>
        <location evidence="2">Membrane</location>
        <topology evidence="2">Multi-pass membrane protein</topology>
    </subcellularLocation>
</comment>
<comment type="similarity">
    <text evidence="7">Belongs to the ABC transporter superfamily. ABCB family. Multidrug resistance exporter (TC 3.A.1.201) subfamily.</text>
</comment>
<name>MDR3_ENTH1</name>
<keyword id="KW-0067">ATP-binding</keyword>
<keyword id="KW-0325">Glycoprotein</keyword>
<keyword id="KW-0472">Membrane</keyword>
<keyword id="KW-0547">Nucleotide-binding</keyword>
<keyword id="KW-1185">Reference proteome</keyword>
<keyword id="KW-0677">Repeat</keyword>
<keyword id="KW-1278">Translocase</keyword>
<keyword id="KW-0812">Transmembrane</keyword>
<keyword id="KW-1133">Transmembrane helix</keyword>
<keyword id="KW-0813">Transport</keyword>
<reference evidence="9" key="1">
    <citation type="journal article" date="2005" name="Nature">
        <title>The genome of the protist parasite Entamoeba histolytica.</title>
        <authorList>
            <person name="Loftus B.J."/>
            <person name="Anderson I."/>
            <person name="Davies R."/>
            <person name="Alsmark U.C."/>
            <person name="Samuelson J."/>
            <person name="Amedeo P."/>
            <person name="Roncaglia P."/>
            <person name="Berriman M."/>
            <person name="Hirt R.P."/>
            <person name="Mann B.J."/>
            <person name="Nozaki T."/>
            <person name="Suh B."/>
            <person name="Pop M."/>
            <person name="Duchene M."/>
            <person name="Ackers J."/>
            <person name="Tannich E."/>
            <person name="Leippe M."/>
            <person name="Hofer M."/>
            <person name="Bruchhaus I."/>
            <person name="Willhoeft U."/>
            <person name="Bhattacharya A."/>
            <person name="Chillingworth T."/>
            <person name="Churcher C.M."/>
            <person name="Hance Z."/>
            <person name="Harris B."/>
            <person name="Harris D."/>
            <person name="Jagels K."/>
            <person name="Moule S."/>
            <person name="Mungall K.L."/>
            <person name="Ormond D."/>
            <person name="Squares R."/>
            <person name="Whitehead S."/>
            <person name="Quail M.A."/>
            <person name="Rabbinowitsch E."/>
            <person name="Norbertczak H."/>
            <person name="Price C."/>
            <person name="Wang Z."/>
            <person name="Guillen N."/>
            <person name="Gilchrist C."/>
            <person name="Stroup S.E."/>
            <person name="Bhattacharya S."/>
            <person name="Lohia A."/>
            <person name="Foster P.G."/>
            <person name="Sicheritz-Ponten T."/>
            <person name="Weber C."/>
            <person name="Singh U."/>
            <person name="Mukherjee C."/>
            <person name="El-Sayed N.M.A."/>
            <person name="Petri W.A."/>
            <person name="Clark C.G."/>
            <person name="Embley T.M."/>
            <person name="Barrell B.G."/>
            <person name="Fraser C.M."/>
            <person name="Hall N."/>
        </authorList>
    </citation>
    <scope>NUCLEOTIDE SEQUENCE [LARGE SCALE GENOMIC DNA]</scope>
    <source>
        <strain evidence="9">ATCC 30459 / HM-1:IMSS / ABRM</strain>
    </source>
</reference>
<reference evidence="8" key="2">
    <citation type="journal article" date="1990" name="Mol. Biochem. Parasitol.">
        <title>Emetine-resistant mutants of Entamoeba histolytica overexpress mRNAs for multidrug resistance.</title>
        <authorList>
            <person name="Samuelson J."/>
            <person name="Ayala P."/>
            <person name="Orozco E."/>
            <person name="Wirth D."/>
        </authorList>
    </citation>
    <scope>NUCLEOTIDE SEQUENCE [GENOMIC DNA] OF 441-555</scope>
    <source>
        <strain evidence="8">ATCC 30459 / HM-1:IMSS / ABRM</strain>
    </source>
</reference>
<organism evidence="9">
    <name type="scientific">Entamoeba histolytica (strain ATCC 30459 / HM-1:IMSS / ABRM)</name>
    <dbReference type="NCBI Taxonomy" id="294381"/>
    <lineage>
        <taxon>Eukaryota</taxon>
        <taxon>Amoebozoa</taxon>
        <taxon>Evosea</taxon>
        <taxon>Archamoebae</taxon>
        <taxon>Mastigamoebida</taxon>
        <taxon>Entamoebidae</taxon>
        <taxon>Entamoeba</taxon>
    </lineage>
</organism>
<protein>
    <recommendedName>
        <fullName evidence="6">Multidrug resistance protein 3</fullName>
        <ecNumber evidence="1">7.6.2.2</ecNumber>
    </recommendedName>
    <alternativeName>
        <fullName evidence="6">P-glycoprotein</fullName>
    </alternativeName>
</protein>
<proteinExistence type="inferred from homology"/>
<accession>P16876</accession>
<accession>A0A175JRF6</accession>
<accession>C4M3W0</accession>
<gene>
    <name evidence="6" type="primary">MDR3</name>
    <name evidence="9" type="ORF">EHI_016380</name>
</gene>
<feature type="chain" id="PRO_0000093373" description="Multidrug resistance protein 3">
    <location>
        <begin position="1"/>
        <end position="1312"/>
    </location>
</feature>
<feature type="transmembrane region" description="Helical" evidence="4">
    <location>
        <begin position="51"/>
        <end position="71"/>
    </location>
</feature>
<feature type="transmembrane region" description="Helical" evidence="4">
    <location>
        <begin position="127"/>
        <end position="147"/>
    </location>
</feature>
<feature type="transmembrane region" description="Helical" evidence="4">
    <location>
        <begin position="197"/>
        <end position="217"/>
    </location>
</feature>
<feature type="transmembrane region" description="Helical" evidence="4">
    <location>
        <begin position="224"/>
        <end position="244"/>
    </location>
</feature>
<feature type="transmembrane region" description="Helical" evidence="4">
    <location>
        <begin position="302"/>
        <end position="322"/>
    </location>
</feature>
<feature type="transmembrane region" description="Helical" evidence="4">
    <location>
        <begin position="344"/>
        <end position="364"/>
    </location>
</feature>
<feature type="transmembrane region" description="Helical" evidence="4">
    <location>
        <begin position="725"/>
        <end position="745"/>
    </location>
</feature>
<feature type="transmembrane region" description="Helical" evidence="4">
    <location>
        <begin position="776"/>
        <end position="796"/>
    </location>
</feature>
<feature type="transmembrane region" description="Helical" evidence="4">
    <location>
        <begin position="852"/>
        <end position="872"/>
    </location>
</feature>
<feature type="transmembrane region" description="Helical" evidence="4">
    <location>
        <begin position="874"/>
        <end position="894"/>
    </location>
</feature>
<feature type="transmembrane region" description="Helical" evidence="4">
    <location>
        <begin position="958"/>
        <end position="978"/>
    </location>
</feature>
<feature type="domain" description="ABC transmembrane type-1 1" evidence="4">
    <location>
        <begin position="59"/>
        <end position="369"/>
    </location>
</feature>
<feature type="domain" description="ABC transporter 1" evidence="3">
    <location>
        <begin position="404"/>
        <end position="643"/>
    </location>
</feature>
<feature type="domain" description="ABC transmembrane type-1 2" evidence="4">
    <location>
        <begin position="724"/>
        <end position="1033"/>
    </location>
</feature>
<feature type="domain" description="ABC transporter 2" evidence="3">
    <location>
        <begin position="1068"/>
        <end position="1307"/>
    </location>
</feature>
<feature type="binding site" evidence="3">
    <location>
        <begin position="439"/>
        <end position="446"/>
    </location>
    <ligand>
        <name>ATP</name>
        <dbReference type="ChEBI" id="CHEBI:30616"/>
    </ligand>
</feature>
<feature type="binding site" evidence="3">
    <location>
        <begin position="1103"/>
        <end position="1110"/>
    </location>
    <ligand>
        <name>ATP</name>
        <dbReference type="ChEBI" id="CHEBI:30616"/>
    </ligand>
</feature>
<feature type="glycosylation site" description="N-linked (GlcNAc...) asparagine" evidence="5">
    <location>
        <position position="98"/>
    </location>
</feature>
<feature type="glycosylation site" description="N-linked (GlcNAc...) asparagine" evidence="5">
    <location>
        <position position="819"/>
    </location>
</feature>
<feature type="sequence conflict" description="In Ref. 2; AAA29108." evidence="7" ref="2">
    <original>GAKDGE</original>
    <variation>ELKWR</variation>
    <location>
        <begin position="503"/>
        <end position="508"/>
    </location>
</feature>
<feature type="sequence conflict" description="In Ref. 2; AAA29108." evidence="7" ref="2">
    <original>I</original>
    <variation>L</variation>
    <location>
        <position position="516"/>
    </location>
</feature>
<feature type="sequence conflict" description="In Ref. 2; AAA29108." evidence="7" ref="2">
    <original>SHLPE</original>
    <variation>FFIFQQ</variation>
    <location>
        <begin position="529"/>
        <end position="533"/>
    </location>
</feature>
<feature type="sequence conflict" description="In Ref. 2; AAA29108." evidence="7" ref="2">
    <original>E</original>
    <variation>A</variation>
    <location>
        <position position="541"/>
    </location>
</feature>
<evidence type="ECO:0000250" key="1">
    <source>
        <dbReference type="UniProtKB" id="P08183"/>
    </source>
</evidence>
<evidence type="ECO:0000255" key="2"/>
<evidence type="ECO:0000255" key="3">
    <source>
        <dbReference type="PROSITE-ProRule" id="PRU00434"/>
    </source>
</evidence>
<evidence type="ECO:0000255" key="4">
    <source>
        <dbReference type="PROSITE-ProRule" id="PRU00441"/>
    </source>
</evidence>
<evidence type="ECO:0000255" key="5">
    <source>
        <dbReference type="PROSITE-ProRule" id="PRU00498"/>
    </source>
</evidence>
<evidence type="ECO:0000303" key="6">
    <source>
    </source>
</evidence>
<evidence type="ECO:0000305" key="7"/>
<evidence type="ECO:0000312" key="8">
    <source>
        <dbReference type="EMBL" id="AAA29108.1"/>
    </source>
</evidence>
<evidence type="ECO:0000312" key="9">
    <source>
        <dbReference type="EMBL" id="EAL48129.2"/>
    </source>
</evidence>